<reference key="1">
    <citation type="journal article" date="1985" name="Cell">
        <title>Nucleotide sequence of the visna lentivirus: relationship to the AIDS virus.</title>
        <authorList>
            <person name="Sonigo P."/>
            <person name="Alizon M."/>
            <person name="Staskus K."/>
            <person name="Klatzmann D."/>
            <person name="Cole S."/>
            <person name="Danos O."/>
            <person name="Retzel E."/>
            <person name="Tiollais P."/>
            <person name="Haase A."/>
            <person name="Wain-Hobson S."/>
        </authorList>
    </citation>
    <scope>NUCLEOTIDE SEQUENCE</scope>
</reference>
<reference key="2">
    <citation type="journal article" date="1987" name="J. Virol.">
        <title>The visna virus genome: evidence for a hypervariable site in the env gene and sequence homology among lentivirus envelope proteins.</title>
        <authorList>
            <person name="Braun M.J."/>
            <person name="Clements J.E."/>
            <person name="Gonda M.A."/>
        </authorList>
    </citation>
    <scope>NUCLEOTIDE SEQUENCE [GENOMIC RNA]</scope>
</reference>
<reference key="3">
    <citation type="journal article" date="1989" name="Virology">
        <title>The open reading frame S of visna virus genome is a trans-activating gene.</title>
        <authorList>
            <person name="Gourdou I."/>
            <person name="Mazarin V."/>
            <person name="Querat G."/>
            <person name="Sauze N."/>
            <person name="Vigne R."/>
        </authorList>
    </citation>
    <scope>NUCLEOTIDE SEQUENCE [MRNA]</scope>
</reference>
<reference key="4">
    <citation type="journal article" date="1989" name="Proc. Natl. Acad. Sci. U.S.A.">
        <title>Characterization of a cDNA clone encoding the visna virus transactivating protein.</title>
        <authorList>
            <person name="Davis J.L."/>
            <person name="Clements J.E."/>
        </authorList>
    </citation>
    <scope>NUCLEOTIDE SEQUENCE [MRNA]</scope>
</reference>
<sequence length="94" mass="11280">MEEVPRRQPGGLVEVEGVFQFYEDWECWDYVSQRVSDERLQRWLAMLTNNQLRRQVIREAQIWMWKHKGAAVRRNCGCRLCNPGWGSQVRNVEL</sequence>
<feature type="chain" id="PRO_0000085490" description="Probable Vpr-like protein">
    <location>
        <begin position="1"/>
        <end position="94"/>
    </location>
</feature>
<feature type="sequence conflict" description="In Ref. 3 and 4." evidence="2" ref="3 4">
    <original>V</original>
    <variation>A</variation>
    <location>
        <position position="15"/>
    </location>
</feature>
<feature type="sequence conflict" description="In Ref. 3; AAA75436." evidence="2" ref="3">
    <original>D</original>
    <variation>G</variation>
    <location>
        <position position="37"/>
    </location>
</feature>
<feature type="sequence conflict" description="In Ref. 4; AAA48364." evidence="2" ref="4">
    <original>M</original>
    <variation>I</variation>
    <location>
        <position position="64"/>
    </location>
</feature>
<protein>
    <recommendedName>
        <fullName>Probable Vpr-like protein</fullName>
    </recommendedName>
    <alternativeName>
        <fullName>Protein S</fullName>
    </alternativeName>
    <alternativeName>
        <fullName>Protein Tat</fullName>
    </alternativeName>
</protein>
<organismHost>
    <name type="scientific">Ovis aries</name>
    <name type="common">Sheep</name>
    <dbReference type="NCBI Taxonomy" id="9940"/>
</organismHost>
<dbReference type="EMBL" id="M10608">
    <property type="status" value="NOT_ANNOTATED_CDS"/>
    <property type="molecule type" value="Unassigned_DNA"/>
</dbReference>
<dbReference type="EMBL" id="M51543">
    <property type="protein sequence ID" value="AAA48356.1"/>
    <property type="status" value="ALT_INIT"/>
    <property type="molecule type" value="Genomic_RNA"/>
</dbReference>
<dbReference type="EMBL" id="J04359">
    <property type="protein sequence ID" value="AAA75436.1"/>
    <property type="molecule type" value="mRNA"/>
</dbReference>
<dbReference type="EMBL" id="M23047">
    <property type="protein sequence ID" value="AAA48364.1"/>
    <property type="molecule type" value="mRNA"/>
</dbReference>
<dbReference type="PIR" id="A32184">
    <property type="entry name" value="TNLJVS"/>
</dbReference>
<dbReference type="Proteomes" id="UP000106909">
    <property type="component" value="Genome"/>
</dbReference>
<dbReference type="Proteomes" id="UP000158691">
    <property type="component" value="Genome"/>
</dbReference>
<dbReference type="GO" id="GO:0042025">
    <property type="term" value="C:host cell nucleus"/>
    <property type="evidence" value="ECO:0007669"/>
    <property type="project" value="UniProtKB-SubCell"/>
</dbReference>
<dbReference type="GO" id="GO:0044423">
    <property type="term" value="C:virion component"/>
    <property type="evidence" value="ECO:0007669"/>
    <property type="project" value="UniProtKB-KW"/>
</dbReference>
<dbReference type="InterPro" id="IPR004247">
    <property type="entry name" value="Lentiviral_Vpr-like"/>
</dbReference>
<dbReference type="Pfam" id="PF02998">
    <property type="entry name" value="Lentiviral_Tat"/>
    <property type="match status" value="1"/>
</dbReference>
<organism>
    <name type="scientific">Maedi visna virus (strain 1514)</name>
    <name type="common">MVV</name>
    <name type="synonym">Visna lentivirus</name>
    <dbReference type="NCBI Taxonomy" id="11742"/>
    <lineage>
        <taxon>Viruses</taxon>
        <taxon>Riboviria</taxon>
        <taxon>Pararnavirae</taxon>
        <taxon>Artverviricota</taxon>
        <taxon>Revtraviricetes</taxon>
        <taxon>Ortervirales</taxon>
        <taxon>Retroviridae</taxon>
        <taxon>Orthoretrovirinae</taxon>
        <taxon>Lentivirus</taxon>
        <taxon>Visna-maedi virus</taxon>
    </lineage>
</organism>
<proteinExistence type="inferred from homology"/>
<comment type="function">
    <text evidence="1">Seems to function as a Vpr-like protein, since it mediates host cell cycle arrest in G2 phase. Cell cycle arrest creates a favorable environment for maximizing viral expression and production (By similarity).</text>
</comment>
<comment type="subcellular location">
    <subcellularLocation>
        <location evidence="2">Virion</location>
    </subcellularLocation>
    <subcellularLocation>
        <location>Host nucleus</location>
    </subcellularLocation>
</comment>
<comment type="caution">
    <text evidence="2">Was first thought to be the equivalent of lentiviral Tat protein, but it does not induce any transactivation of viral LTR promoter, or if any, at very low rate. The LTR promoter of this virus has a high basal activity and does apparently not need transactivation by a Tat-like protein.</text>
</comment>
<comment type="sequence caution" evidence="2">
    <conflict type="erroneous initiation">
        <sequence resource="EMBL-CDS" id="AAA48356"/>
    </conflict>
</comment>
<evidence type="ECO:0000250" key="1"/>
<evidence type="ECO:0000305" key="2"/>
<name>VPRL_VILV</name>
<gene>
    <name type="primary">tat</name>
</gene>
<keyword id="KW-0131">Cell cycle</keyword>
<keyword id="KW-1048">Host nucleus</keyword>
<keyword id="KW-0946">Virion</keyword>
<accession>P03408</accession>